<accession>B2U774</accession>
<comment type="function">
    <text evidence="1">May play a key role in the regulation of the intracellular concentration of adenosylhomocysteine.</text>
</comment>
<comment type="catalytic activity">
    <reaction evidence="1">
        <text>S-adenosyl-L-homocysteine + H2O = L-homocysteine + adenosine</text>
        <dbReference type="Rhea" id="RHEA:21708"/>
        <dbReference type="ChEBI" id="CHEBI:15377"/>
        <dbReference type="ChEBI" id="CHEBI:16335"/>
        <dbReference type="ChEBI" id="CHEBI:57856"/>
        <dbReference type="ChEBI" id="CHEBI:58199"/>
        <dbReference type="EC" id="3.13.2.1"/>
    </reaction>
</comment>
<comment type="cofactor">
    <cofactor evidence="1">
        <name>NAD(+)</name>
        <dbReference type="ChEBI" id="CHEBI:57540"/>
    </cofactor>
    <text evidence="1">Binds 1 NAD(+) per subunit.</text>
</comment>
<comment type="pathway">
    <text evidence="1">Amino-acid biosynthesis; L-homocysteine biosynthesis; L-homocysteine from S-adenosyl-L-homocysteine: step 1/1.</text>
</comment>
<comment type="subcellular location">
    <subcellularLocation>
        <location evidence="1">Cytoplasm</location>
    </subcellularLocation>
</comment>
<comment type="similarity">
    <text evidence="1">Belongs to the adenosylhomocysteinase family.</text>
</comment>
<reference key="1">
    <citation type="submission" date="2008-05" db="EMBL/GenBank/DDBJ databases">
        <title>Complete sequence of chromosome 1 of Ralstonia pickettii 12J.</title>
        <authorList>
            <person name="Lucas S."/>
            <person name="Copeland A."/>
            <person name="Lapidus A."/>
            <person name="Glavina del Rio T."/>
            <person name="Dalin E."/>
            <person name="Tice H."/>
            <person name="Bruce D."/>
            <person name="Goodwin L."/>
            <person name="Pitluck S."/>
            <person name="Meincke L."/>
            <person name="Brettin T."/>
            <person name="Detter J.C."/>
            <person name="Han C."/>
            <person name="Kuske C.R."/>
            <person name="Schmutz J."/>
            <person name="Larimer F."/>
            <person name="Land M."/>
            <person name="Hauser L."/>
            <person name="Kyrpides N."/>
            <person name="Mikhailova N."/>
            <person name="Marsh T."/>
            <person name="Richardson P."/>
        </authorList>
    </citation>
    <scope>NUCLEOTIDE SEQUENCE [LARGE SCALE GENOMIC DNA]</scope>
    <source>
        <strain>12J</strain>
    </source>
</reference>
<evidence type="ECO:0000255" key="1">
    <source>
        <dbReference type="HAMAP-Rule" id="MF_00563"/>
    </source>
</evidence>
<proteinExistence type="inferred from homology"/>
<sequence length="474" mass="52042">MNAVTDLKHDYLVADIKLADWGRKEIAIAETEMPGLMAIRDEFAASQPLKGARIAGSLHMTIQTAVLIETLKALGADVRWASCNIFSTQDHAAAAIAATGTPVFAFKGESLQEYWDFTHRIFEWADGGTPNMILDDGGDATLLLHLGAKAEKDVSVLAHPGSEEETFLFAAIKEKLAKDATFYSRNLDAIKGVTEETTTGVHRLYQMAQRGELRFPAINVNDSVTKSKFDNLYGCRESLVDGIKRATDVMIAGKVAIVAGYGDVGKGSAQALRALSAQVWVTEIDPICALQAAMEGYRVVTMDYAAEHGDIFVTCTGNYHVITHDHMAKMKDQAIVCNIGHFDNEIDIASVEKYQWEEIKPQVDHVIFPDGKKIIILAKGRLVNLGCATGHPSYVMSSSFANQTIAQIELWTEAVKGSNKYPVGVYTLPKHLDEKVARLQLKKLNAQLTELTDQQAAYIGVSKEGPYKADHYRY</sequence>
<feature type="chain" id="PRO_1000129300" description="Adenosylhomocysteinase">
    <location>
        <begin position="1"/>
        <end position="474"/>
    </location>
</feature>
<feature type="binding site" evidence="1">
    <location>
        <position position="61"/>
    </location>
    <ligand>
        <name>substrate</name>
    </ligand>
</feature>
<feature type="binding site" evidence="1">
    <location>
        <position position="136"/>
    </location>
    <ligand>
        <name>substrate</name>
    </ligand>
</feature>
<feature type="binding site" evidence="1">
    <location>
        <position position="196"/>
    </location>
    <ligand>
        <name>substrate</name>
    </ligand>
</feature>
<feature type="binding site" evidence="1">
    <location>
        <begin position="197"/>
        <end position="199"/>
    </location>
    <ligand>
        <name>NAD(+)</name>
        <dbReference type="ChEBI" id="CHEBI:57540"/>
    </ligand>
</feature>
<feature type="binding site" evidence="1">
    <location>
        <position position="226"/>
    </location>
    <ligand>
        <name>substrate</name>
    </ligand>
</feature>
<feature type="binding site" evidence="1">
    <location>
        <position position="230"/>
    </location>
    <ligand>
        <name>substrate</name>
    </ligand>
</feature>
<feature type="binding site" evidence="1">
    <location>
        <position position="231"/>
    </location>
    <ligand>
        <name>NAD(+)</name>
        <dbReference type="ChEBI" id="CHEBI:57540"/>
    </ligand>
</feature>
<feature type="binding site" evidence="1">
    <location>
        <begin position="260"/>
        <end position="265"/>
    </location>
    <ligand>
        <name>NAD(+)</name>
        <dbReference type="ChEBI" id="CHEBI:57540"/>
    </ligand>
</feature>
<feature type="binding site" evidence="1">
    <location>
        <position position="283"/>
    </location>
    <ligand>
        <name>NAD(+)</name>
        <dbReference type="ChEBI" id="CHEBI:57540"/>
    </ligand>
</feature>
<feature type="binding site" evidence="1">
    <location>
        <position position="318"/>
    </location>
    <ligand>
        <name>NAD(+)</name>
        <dbReference type="ChEBI" id="CHEBI:57540"/>
    </ligand>
</feature>
<feature type="binding site" evidence="1">
    <location>
        <begin position="339"/>
        <end position="341"/>
    </location>
    <ligand>
        <name>NAD(+)</name>
        <dbReference type="ChEBI" id="CHEBI:57540"/>
    </ligand>
</feature>
<feature type="binding site" evidence="1">
    <location>
        <position position="384"/>
    </location>
    <ligand>
        <name>NAD(+)</name>
        <dbReference type="ChEBI" id="CHEBI:57540"/>
    </ligand>
</feature>
<dbReference type="EC" id="3.13.2.1" evidence="1"/>
<dbReference type="EMBL" id="CP001068">
    <property type="protein sequence ID" value="ACD28774.1"/>
    <property type="molecule type" value="Genomic_DNA"/>
</dbReference>
<dbReference type="SMR" id="B2U774"/>
<dbReference type="STRING" id="402626.Rpic_3656"/>
<dbReference type="KEGG" id="rpi:Rpic_3656"/>
<dbReference type="eggNOG" id="COG0499">
    <property type="taxonomic scope" value="Bacteria"/>
</dbReference>
<dbReference type="HOGENOM" id="CLU_025194_2_1_4"/>
<dbReference type="UniPathway" id="UPA00314">
    <property type="reaction ID" value="UER00076"/>
</dbReference>
<dbReference type="GO" id="GO:0005829">
    <property type="term" value="C:cytosol"/>
    <property type="evidence" value="ECO:0007669"/>
    <property type="project" value="TreeGrafter"/>
</dbReference>
<dbReference type="GO" id="GO:0004013">
    <property type="term" value="F:adenosylhomocysteinase activity"/>
    <property type="evidence" value="ECO:0007669"/>
    <property type="project" value="UniProtKB-UniRule"/>
</dbReference>
<dbReference type="GO" id="GO:0071269">
    <property type="term" value="P:L-homocysteine biosynthetic process"/>
    <property type="evidence" value="ECO:0007669"/>
    <property type="project" value="UniProtKB-UniRule"/>
</dbReference>
<dbReference type="GO" id="GO:0006730">
    <property type="term" value="P:one-carbon metabolic process"/>
    <property type="evidence" value="ECO:0007669"/>
    <property type="project" value="UniProtKB-KW"/>
</dbReference>
<dbReference type="GO" id="GO:0033353">
    <property type="term" value="P:S-adenosylmethionine cycle"/>
    <property type="evidence" value="ECO:0007669"/>
    <property type="project" value="TreeGrafter"/>
</dbReference>
<dbReference type="CDD" id="cd00401">
    <property type="entry name" value="SAHH"/>
    <property type="match status" value="1"/>
</dbReference>
<dbReference type="FunFam" id="3.40.50.720:FF:000004">
    <property type="entry name" value="Adenosylhomocysteinase"/>
    <property type="match status" value="1"/>
</dbReference>
<dbReference type="Gene3D" id="3.40.50.1480">
    <property type="entry name" value="Adenosylhomocysteinase-like"/>
    <property type="match status" value="1"/>
</dbReference>
<dbReference type="Gene3D" id="3.40.50.720">
    <property type="entry name" value="NAD(P)-binding Rossmann-like Domain"/>
    <property type="match status" value="1"/>
</dbReference>
<dbReference type="HAMAP" id="MF_00563">
    <property type="entry name" value="AdoHcyase"/>
    <property type="match status" value="1"/>
</dbReference>
<dbReference type="InterPro" id="IPR042172">
    <property type="entry name" value="Adenosylhomocyst_ase-like_sf"/>
</dbReference>
<dbReference type="InterPro" id="IPR000043">
    <property type="entry name" value="Adenosylhomocysteinase-like"/>
</dbReference>
<dbReference type="InterPro" id="IPR015878">
    <property type="entry name" value="Ado_hCys_hydrolase_NAD-bd"/>
</dbReference>
<dbReference type="InterPro" id="IPR036291">
    <property type="entry name" value="NAD(P)-bd_dom_sf"/>
</dbReference>
<dbReference type="InterPro" id="IPR020082">
    <property type="entry name" value="S-Ado-L-homoCys_hydrolase_CS"/>
</dbReference>
<dbReference type="NCBIfam" id="TIGR00936">
    <property type="entry name" value="ahcY"/>
    <property type="match status" value="1"/>
</dbReference>
<dbReference type="NCBIfam" id="NF004005">
    <property type="entry name" value="PRK05476.2-3"/>
    <property type="match status" value="1"/>
</dbReference>
<dbReference type="PANTHER" id="PTHR23420">
    <property type="entry name" value="ADENOSYLHOMOCYSTEINASE"/>
    <property type="match status" value="1"/>
</dbReference>
<dbReference type="PANTHER" id="PTHR23420:SF0">
    <property type="entry name" value="ADENOSYLHOMOCYSTEINASE"/>
    <property type="match status" value="1"/>
</dbReference>
<dbReference type="Pfam" id="PF05221">
    <property type="entry name" value="AdoHcyase"/>
    <property type="match status" value="1"/>
</dbReference>
<dbReference type="Pfam" id="PF00670">
    <property type="entry name" value="AdoHcyase_NAD"/>
    <property type="match status" value="1"/>
</dbReference>
<dbReference type="PIRSF" id="PIRSF001109">
    <property type="entry name" value="Ad_hcy_hydrolase"/>
    <property type="match status" value="1"/>
</dbReference>
<dbReference type="SMART" id="SM00996">
    <property type="entry name" value="AdoHcyase"/>
    <property type="match status" value="1"/>
</dbReference>
<dbReference type="SMART" id="SM00997">
    <property type="entry name" value="AdoHcyase_NAD"/>
    <property type="match status" value="1"/>
</dbReference>
<dbReference type="SUPFAM" id="SSF52283">
    <property type="entry name" value="Formate/glycerate dehydrogenase catalytic domain-like"/>
    <property type="match status" value="1"/>
</dbReference>
<dbReference type="SUPFAM" id="SSF51735">
    <property type="entry name" value="NAD(P)-binding Rossmann-fold domains"/>
    <property type="match status" value="1"/>
</dbReference>
<dbReference type="PROSITE" id="PS00738">
    <property type="entry name" value="ADOHCYASE_1"/>
    <property type="match status" value="1"/>
</dbReference>
<dbReference type="PROSITE" id="PS00739">
    <property type="entry name" value="ADOHCYASE_2"/>
    <property type="match status" value="1"/>
</dbReference>
<keyword id="KW-0963">Cytoplasm</keyword>
<keyword id="KW-0378">Hydrolase</keyword>
<keyword id="KW-0520">NAD</keyword>
<keyword id="KW-0554">One-carbon metabolism</keyword>
<gene>
    <name evidence="1" type="primary">ahcY</name>
    <name type="ordered locus">Rpic_3656</name>
</gene>
<protein>
    <recommendedName>
        <fullName evidence="1">Adenosylhomocysteinase</fullName>
        <ecNumber evidence="1">3.13.2.1</ecNumber>
    </recommendedName>
    <alternativeName>
        <fullName evidence="1">S-adenosyl-L-homocysteine hydrolase</fullName>
        <shortName evidence="1">AdoHcyase</shortName>
    </alternativeName>
</protein>
<name>SAHH_RALPJ</name>
<organism>
    <name type="scientific">Ralstonia pickettii (strain 12J)</name>
    <dbReference type="NCBI Taxonomy" id="402626"/>
    <lineage>
        <taxon>Bacteria</taxon>
        <taxon>Pseudomonadati</taxon>
        <taxon>Pseudomonadota</taxon>
        <taxon>Betaproteobacteria</taxon>
        <taxon>Burkholderiales</taxon>
        <taxon>Burkholderiaceae</taxon>
        <taxon>Ralstonia</taxon>
    </lineage>
</organism>